<protein>
    <recommendedName>
        <fullName>Pre-mRNA-splicing factor CWC2</fullName>
    </recommendedName>
</protein>
<keyword id="KW-0131">Cell cycle</keyword>
<keyword id="KW-0479">Metal-binding</keyword>
<keyword id="KW-0507">mRNA processing</keyword>
<keyword id="KW-0508">mRNA splicing</keyword>
<keyword id="KW-0539">Nucleus</keyword>
<keyword id="KW-1185">Reference proteome</keyword>
<keyword id="KW-0694">RNA-binding</keyword>
<keyword id="KW-0747">Spliceosome</keyword>
<keyword id="KW-0862">Zinc</keyword>
<keyword id="KW-0863">Zinc-finger</keyword>
<organism>
    <name type="scientific">Debaryomyces hansenii (strain ATCC 36239 / CBS 767 / BCRC 21394 / JCM 1990 / NBRC 0083 / IGC 2968)</name>
    <name type="common">Yeast</name>
    <name type="synonym">Torulaspora hansenii</name>
    <dbReference type="NCBI Taxonomy" id="284592"/>
    <lineage>
        <taxon>Eukaryota</taxon>
        <taxon>Fungi</taxon>
        <taxon>Dikarya</taxon>
        <taxon>Ascomycota</taxon>
        <taxon>Saccharomycotina</taxon>
        <taxon>Pichiomycetes</taxon>
        <taxon>Debaryomycetaceae</taxon>
        <taxon>Debaryomyces</taxon>
    </lineage>
</organism>
<sequence>MSYREPLGEYDCHIDNTRNMPPDTTIVSKSKKGKPARLQVDPESIPDDDRPPQTGNVFNIWFLKWSGGDSSTKNYTKSKFRVNIKKDSGYTKAPSNAPLCLFFARGCCYLGKKCSYYHRLPSDTDYFIPTQDCFGRDKTSDYKDDMNGVGSFSKSNRTLYIGGLHMDDKMENTLTKHFQEFGSIDKIRVLHSKACAFVTFRTENEAQFAKEAMQNQSLDGNEVLNIRWANEDPNPEAQRQEKRRLEEVTVNTVKNLLDSVSQTERKTKKVTVEVPDEIEETESSSEIKALPSSETSSGLFNNSSLNALKQFQSKKRKIDKPQPKENLPTMLGYSSSDEE</sequence>
<accession>Q6BLU8</accession>
<evidence type="ECO:0000250" key="1"/>
<evidence type="ECO:0000255" key="2">
    <source>
        <dbReference type="PROSITE-ProRule" id="PRU00176"/>
    </source>
</evidence>
<evidence type="ECO:0000255" key="3">
    <source>
        <dbReference type="PROSITE-ProRule" id="PRU00723"/>
    </source>
</evidence>
<evidence type="ECO:0000256" key="4">
    <source>
        <dbReference type="SAM" id="MobiDB-lite"/>
    </source>
</evidence>
<evidence type="ECO:0000305" key="5"/>
<reference key="1">
    <citation type="journal article" date="2004" name="Nature">
        <title>Genome evolution in yeasts.</title>
        <authorList>
            <person name="Dujon B."/>
            <person name="Sherman D."/>
            <person name="Fischer G."/>
            <person name="Durrens P."/>
            <person name="Casaregola S."/>
            <person name="Lafontaine I."/>
            <person name="de Montigny J."/>
            <person name="Marck C."/>
            <person name="Neuveglise C."/>
            <person name="Talla E."/>
            <person name="Goffard N."/>
            <person name="Frangeul L."/>
            <person name="Aigle M."/>
            <person name="Anthouard V."/>
            <person name="Babour A."/>
            <person name="Barbe V."/>
            <person name="Barnay S."/>
            <person name="Blanchin S."/>
            <person name="Beckerich J.-M."/>
            <person name="Beyne E."/>
            <person name="Bleykasten C."/>
            <person name="Boisrame A."/>
            <person name="Boyer J."/>
            <person name="Cattolico L."/>
            <person name="Confanioleri F."/>
            <person name="de Daruvar A."/>
            <person name="Despons L."/>
            <person name="Fabre E."/>
            <person name="Fairhead C."/>
            <person name="Ferry-Dumazet H."/>
            <person name="Groppi A."/>
            <person name="Hantraye F."/>
            <person name="Hennequin C."/>
            <person name="Jauniaux N."/>
            <person name="Joyet P."/>
            <person name="Kachouri R."/>
            <person name="Kerrest A."/>
            <person name="Koszul R."/>
            <person name="Lemaire M."/>
            <person name="Lesur I."/>
            <person name="Ma L."/>
            <person name="Muller H."/>
            <person name="Nicaud J.-M."/>
            <person name="Nikolski M."/>
            <person name="Oztas S."/>
            <person name="Ozier-Kalogeropoulos O."/>
            <person name="Pellenz S."/>
            <person name="Potier S."/>
            <person name="Richard G.-F."/>
            <person name="Straub M.-L."/>
            <person name="Suleau A."/>
            <person name="Swennen D."/>
            <person name="Tekaia F."/>
            <person name="Wesolowski-Louvel M."/>
            <person name="Westhof E."/>
            <person name="Wirth B."/>
            <person name="Zeniou-Meyer M."/>
            <person name="Zivanovic Y."/>
            <person name="Bolotin-Fukuhara M."/>
            <person name="Thierry A."/>
            <person name="Bouchier C."/>
            <person name="Caudron B."/>
            <person name="Scarpelli C."/>
            <person name="Gaillardin C."/>
            <person name="Weissenbach J."/>
            <person name="Wincker P."/>
            <person name="Souciet J.-L."/>
        </authorList>
    </citation>
    <scope>NUCLEOTIDE SEQUENCE [LARGE SCALE GENOMIC DNA]</scope>
    <source>
        <strain>ATCC 36239 / CBS 767 / BCRC 21394 / JCM 1990 / NBRC 0083 / IGC 2968</strain>
    </source>
</reference>
<feature type="chain" id="PRO_0000081544" description="Pre-mRNA-splicing factor CWC2">
    <location>
        <begin position="1"/>
        <end position="339"/>
    </location>
</feature>
<feature type="domain" description="RRM" evidence="2">
    <location>
        <begin position="157"/>
        <end position="231"/>
    </location>
</feature>
<feature type="zinc finger region" description="C3H1-type" evidence="3">
    <location>
        <begin position="94"/>
        <end position="121"/>
    </location>
</feature>
<feature type="region of interest" description="Disordered" evidence="4">
    <location>
        <begin position="17"/>
        <end position="52"/>
    </location>
</feature>
<feature type="region of interest" description="Disordered" evidence="4">
    <location>
        <begin position="276"/>
        <end position="339"/>
    </location>
</feature>
<feature type="compositionally biased region" description="Polar residues" evidence="4">
    <location>
        <begin position="292"/>
        <end position="311"/>
    </location>
</feature>
<proteinExistence type="inferred from homology"/>
<dbReference type="EMBL" id="CR382138">
    <property type="protein sequence ID" value="CAG89166.2"/>
    <property type="molecule type" value="Genomic_DNA"/>
</dbReference>
<dbReference type="RefSeq" id="XP_460823.2">
    <property type="nucleotide sequence ID" value="XM_460823.1"/>
</dbReference>
<dbReference type="SMR" id="Q6BLU8"/>
<dbReference type="FunCoup" id="Q6BLU8">
    <property type="interactions" value="228"/>
</dbReference>
<dbReference type="STRING" id="284592.Q6BLU8"/>
<dbReference type="GeneID" id="2904337"/>
<dbReference type="KEGG" id="dha:DEHA2F10560g"/>
<dbReference type="VEuPathDB" id="FungiDB:DEHA2F10560g"/>
<dbReference type="eggNOG" id="KOG0118">
    <property type="taxonomic scope" value="Eukaryota"/>
</dbReference>
<dbReference type="HOGENOM" id="CLU_043308_1_0_1"/>
<dbReference type="InParanoid" id="Q6BLU8"/>
<dbReference type="OMA" id="WYNKWSQ"/>
<dbReference type="OrthoDB" id="10251848at2759"/>
<dbReference type="Proteomes" id="UP000000599">
    <property type="component" value="Chromosome F"/>
</dbReference>
<dbReference type="GO" id="GO:0071014">
    <property type="term" value="C:post-mRNA release spliceosomal complex"/>
    <property type="evidence" value="ECO:0007669"/>
    <property type="project" value="EnsemblFungi"/>
</dbReference>
<dbReference type="GO" id="GO:0000974">
    <property type="term" value="C:Prp19 complex"/>
    <property type="evidence" value="ECO:0000250"/>
    <property type="project" value="UniProtKB"/>
</dbReference>
<dbReference type="GO" id="GO:0071006">
    <property type="term" value="C:U2-type catalytic step 1 spliceosome"/>
    <property type="evidence" value="ECO:0007669"/>
    <property type="project" value="EnsemblFungi"/>
</dbReference>
<dbReference type="GO" id="GO:0071007">
    <property type="term" value="C:U2-type catalytic step 2 spliceosome"/>
    <property type="evidence" value="ECO:0007669"/>
    <property type="project" value="EnsemblFungi"/>
</dbReference>
<dbReference type="GO" id="GO:0036002">
    <property type="term" value="F:pre-mRNA binding"/>
    <property type="evidence" value="ECO:0000250"/>
    <property type="project" value="UniProtKB"/>
</dbReference>
<dbReference type="GO" id="GO:0017070">
    <property type="term" value="F:U6 snRNA binding"/>
    <property type="evidence" value="ECO:0000250"/>
    <property type="project" value="UniProtKB"/>
</dbReference>
<dbReference type="GO" id="GO:0008270">
    <property type="term" value="F:zinc ion binding"/>
    <property type="evidence" value="ECO:0007669"/>
    <property type="project" value="UniProtKB-KW"/>
</dbReference>
<dbReference type="GO" id="GO:0045292">
    <property type="term" value="P:mRNA cis splicing, via spliceosome"/>
    <property type="evidence" value="ECO:0000250"/>
    <property type="project" value="UniProtKB"/>
</dbReference>
<dbReference type="GO" id="GO:0045787">
    <property type="term" value="P:positive regulation of cell cycle"/>
    <property type="evidence" value="ECO:0000250"/>
    <property type="project" value="UniProtKB"/>
</dbReference>
<dbReference type="GO" id="GO:0033120">
    <property type="term" value="P:positive regulation of RNA splicing"/>
    <property type="evidence" value="ECO:0000250"/>
    <property type="project" value="UniProtKB"/>
</dbReference>
<dbReference type="GO" id="GO:0000387">
    <property type="term" value="P:spliceosomal snRNP assembly"/>
    <property type="evidence" value="ECO:0000250"/>
    <property type="project" value="UniProtKB"/>
</dbReference>
<dbReference type="CDD" id="cd12360">
    <property type="entry name" value="RRM_cwf2"/>
    <property type="match status" value="1"/>
</dbReference>
<dbReference type="FunFam" id="3.30.70.330:FF:000249">
    <property type="entry name" value="Pre-mRNA-splicing factor CWC2, variant"/>
    <property type="match status" value="1"/>
</dbReference>
<dbReference type="Gene3D" id="3.30.70.330">
    <property type="match status" value="1"/>
</dbReference>
<dbReference type="InterPro" id="IPR039171">
    <property type="entry name" value="Cwc2/Slt11"/>
</dbReference>
<dbReference type="InterPro" id="IPR034181">
    <property type="entry name" value="Cwc2_RRM"/>
</dbReference>
<dbReference type="InterPro" id="IPR012677">
    <property type="entry name" value="Nucleotide-bd_a/b_plait_sf"/>
</dbReference>
<dbReference type="InterPro" id="IPR035979">
    <property type="entry name" value="RBD_domain_sf"/>
</dbReference>
<dbReference type="InterPro" id="IPR000504">
    <property type="entry name" value="RRM_dom"/>
</dbReference>
<dbReference type="InterPro" id="IPR032297">
    <property type="entry name" value="Torus"/>
</dbReference>
<dbReference type="InterPro" id="IPR000571">
    <property type="entry name" value="Znf_CCCH"/>
</dbReference>
<dbReference type="InterPro" id="IPR036855">
    <property type="entry name" value="Znf_CCCH_sf"/>
</dbReference>
<dbReference type="PANTHER" id="PTHR14089:SF2">
    <property type="entry name" value="PRE-MRNA-SPLICING FACTOR CWC2"/>
    <property type="match status" value="1"/>
</dbReference>
<dbReference type="PANTHER" id="PTHR14089">
    <property type="entry name" value="PRE-MRNA-SPLICING FACTOR RBM22"/>
    <property type="match status" value="1"/>
</dbReference>
<dbReference type="Pfam" id="PF00076">
    <property type="entry name" value="RRM_1"/>
    <property type="match status" value="1"/>
</dbReference>
<dbReference type="Pfam" id="PF16131">
    <property type="entry name" value="Torus"/>
    <property type="match status" value="1"/>
</dbReference>
<dbReference type="SMART" id="SM00360">
    <property type="entry name" value="RRM"/>
    <property type="match status" value="1"/>
</dbReference>
<dbReference type="SUPFAM" id="SSF90229">
    <property type="entry name" value="CCCH zinc finger"/>
    <property type="match status" value="1"/>
</dbReference>
<dbReference type="SUPFAM" id="SSF54928">
    <property type="entry name" value="RNA-binding domain, RBD"/>
    <property type="match status" value="1"/>
</dbReference>
<dbReference type="PROSITE" id="PS50102">
    <property type="entry name" value="RRM"/>
    <property type="match status" value="1"/>
</dbReference>
<dbReference type="PROSITE" id="PS50103">
    <property type="entry name" value="ZF_C3H1"/>
    <property type="match status" value="1"/>
</dbReference>
<comment type="function">
    <text evidence="1">Involved in the first step of pre-mRNA splicing. Required for cell growth and cell cycle control. Plays a role in the levels of the U1, U4, U5 and U6 snRNAs and the maintenance of the U4/U6 snRNA complex. May provide the link between the 'nineteen complex' NTC spliceosome protein complex and the spliceosome through the U6 snRNA. Associates predominantly with U6 snRNAs in assembled active spliceosomes. Binds directly to the internal stem-loop (ISL) domain of the U6 snRNA and to the pre-mRNA intron near the 5' splice site during the activation and catalytic phases of the spliceosome cycle (By similarity).</text>
</comment>
<comment type="subunit">
    <text evidence="1">Associated with the spliceosome.</text>
</comment>
<comment type="subcellular location">
    <subcellularLocation>
        <location evidence="1">Nucleus</location>
    </subcellularLocation>
</comment>
<comment type="domain">
    <text evidence="1">The C-terminal RRM domain and the zinc finger motif are necessary for RNA-binding.</text>
</comment>
<comment type="similarity">
    <text evidence="5">Belongs to the RRM CWC2 family.</text>
</comment>
<name>CWC2_DEBHA</name>
<gene>
    <name type="primary">CWC2</name>
    <name type="ordered locus">DEHA2F10560g</name>
</gene>